<accession>B6EJ44</accession>
<protein>
    <recommendedName>
        <fullName evidence="1">Recombination protein RecR</fullName>
    </recommendedName>
</protein>
<dbReference type="EMBL" id="FM178379">
    <property type="protein sequence ID" value="CAQ78772.1"/>
    <property type="molecule type" value="Genomic_DNA"/>
</dbReference>
<dbReference type="RefSeq" id="WP_012549842.1">
    <property type="nucleotide sequence ID" value="NC_011312.1"/>
</dbReference>
<dbReference type="SMR" id="B6EJ44"/>
<dbReference type="KEGG" id="vsa:VSAL_I1087"/>
<dbReference type="eggNOG" id="COG0353">
    <property type="taxonomic scope" value="Bacteria"/>
</dbReference>
<dbReference type="HOGENOM" id="CLU_060739_1_2_6"/>
<dbReference type="Proteomes" id="UP000001730">
    <property type="component" value="Chromosome 1"/>
</dbReference>
<dbReference type="GO" id="GO:0003677">
    <property type="term" value="F:DNA binding"/>
    <property type="evidence" value="ECO:0007669"/>
    <property type="project" value="UniProtKB-UniRule"/>
</dbReference>
<dbReference type="GO" id="GO:0008270">
    <property type="term" value="F:zinc ion binding"/>
    <property type="evidence" value="ECO:0007669"/>
    <property type="project" value="UniProtKB-KW"/>
</dbReference>
<dbReference type="GO" id="GO:0006310">
    <property type="term" value="P:DNA recombination"/>
    <property type="evidence" value="ECO:0007669"/>
    <property type="project" value="UniProtKB-UniRule"/>
</dbReference>
<dbReference type="GO" id="GO:0006281">
    <property type="term" value="P:DNA repair"/>
    <property type="evidence" value="ECO:0007669"/>
    <property type="project" value="UniProtKB-UniRule"/>
</dbReference>
<dbReference type="CDD" id="cd01025">
    <property type="entry name" value="TOPRIM_recR"/>
    <property type="match status" value="1"/>
</dbReference>
<dbReference type="FunFam" id="1.10.8.420:FF:000001">
    <property type="entry name" value="Recombination protein RecR"/>
    <property type="match status" value="1"/>
</dbReference>
<dbReference type="FunFam" id="3.40.1360.10:FF:000001">
    <property type="entry name" value="Recombination protein RecR"/>
    <property type="match status" value="1"/>
</dbReference>
<dbReference type="Gene3D" id="3.40.1360.10">
    <property type="match status" value="1"/>
</dbReference>
<dbReference type="Gene3D" id="6.10.250.240">
    <property type="match status" value="1"/>
</dbReference>
<dbReference type="Gene3D" id="1.10.8.420">
    <property type="entry name" value="RecR Domain 1"/>
    <property type="match status" value="1"/>
</dbReference>
<dbReference type="HAMAP" id="MF_00017">
    <property type="entry name" value="RecR"/>
    <property type="match status" value="1"/>
</dbReference>
<dbReference type="InterPro" id="IPR000093">
    <property type="entry name" value="DNA_Rcmb_RecR"/>
</dbReference>
<dbReference type="InterPro" id="IPR023627">
    <property type="entry name" value="Rcmb_RecR"/>
</dbReference>
<dbReference type="InterPro" id="IPR015967">
    <property type="entry name" value="Rcmb_RecR_Znf"/>
</dbReference>
<dbReference type="InterPro" id="IPR006171">
    <property type="entry name" value="TOPRIM_dom"/>
</dbReference>
<dbReference type="InterPro" id="IPR034137">
    <property type="entry name" value="TOPRIM_RecR"/>
</dbReference>
<dbReference type="NCBIfam" id="TIGR00615">
    <property type="entry name" value="recR"/>
    <property type="match status" value="1"/>
</dbReference>
<dbReference type="PANTHER" id="PTHR30446">
    <property type="entry name" value="RECOMBINATION PROTEIN RECR"/>
    <property type="match status" value="1"/>
</dbReference>
<dbReference type="PANTHER" id="PTHR30446:SF0">
    <property type="entry name" value="RECOMBINATION PROTEIN RECR"/>
    <property type="match status" value="1"/>
</dbReference>
<dbReference type="Pfam" id="PF21175">
    <property type="entry name" value="RecR_C"/>
    <property type="match status" value="1"/>
</dbReference>
<dbReference type="Pfam" id="PF21176">
    <property type="entry name" value="RecR_HhH"/>
    <property type="match status" value="1"/>
</dbReference>
<dbReference type="Pfam" id="PF02132">
    <property type="entry name" value="RecR_ZnF"/>
    <property type="match status" value="1"/>
</dbReference>
<dbReference type="Pfam" id="PF13662">
    <property type="entry name" value="Toprim_4"/>
    <property type="match status" value="1"/>
</dbReference>
<dbReference type="SMART" id="SM00493">
    <property type="entry name" value="TOPRIM"/>
    <property type="match status" value="1"/>
</dbReference>
<dbReference type="SUPFAM" id="SSF111304">
    <property type="entry name" value="Recombination protein RecR"/>
    <property type="match status" value="1"/>
</dbReference>
<dbReference type="PROSITE" id="PS01300">
    <property type="entry name" value="RECR"/>
    <property type="match status" value="1"/>
</dbReference>
<dbReference type="PROSITE" id="PS50880">
    <property type="entry name" value="TOPRIM"/>
    <property type="match status" value="1"/>
</dbReference>
<organism>
    <name type="scientific">Aliivibrio salmonicida (strain LFI1238)</name>
    <name type="common">Vibrio salmonicida (strain LFI1238)</name>
    <dbReference type="NCBI Taxonomy" id="316275"/>
    <lineage>
        <taxon>Bacteria</taxon>
        <taxon>Pseudomonadati</taxon>
        <taxon>Pseudomonadota</taxon>
        <taxon>Gammaproteobacteria</taxon>
        <taxon>Vibrionales</taxon>
        <taxon>Vibrionaceae</taxon>
        <taxon>Aliivibrio</taxon>
    </lineage>
</organism>
<proteinExistence type="inferred from homology"/>
<sequence>MRTSGLLEQLMESLRCLPGVGPKSAQRMAFHLLQRNRQGGMQLADALSRAMSEIGHCSECRTFTEEDTCAICLNPKRQMNGELCIVESPADIVAVEATGQFSGRYFVLMGHLSPLDGIGPSDIGLDLLDHRLGRGDIKEVILATNPTVEGEATAHYIAEICQEHHVSASRIAHGVPMGGELELVDGTTLSHSILGRQKLY</sequence>
<keyword id="KW-0227">DNA damage</keyword>
<keyword id="KW-0233">DNA recombination</keyword>
<keyword id="KW-0234">DNA repair</keyword>
<keyword id="KW-0479">Metal-binding</keyword>
<keyword id="KW-0862">Zinc</keyword>
<keyword id="KW-0863">Zinc-finger</keyword>
<gene>
    <name evidence="1" type="primary">recR</name>
    <name type="ordered locus">VSAL_I1087</name>
</gene>
<name>RECR_ALISL</name>
<evidence type="ECO:0000255" key="1">
    <source>
        <dbReference type="HAMAP-Rule" id="MF_00017"/>
    </source>
</evidence>
<comment type="function">
    <text evidence="1">May play a role in DNA repair. It seems to be involved in an RecBC-independent recombinational process of DNA repair. It may act with RecF and RecO.</text>
</comment>
<comment type="similarity">
    <text evidence="1">Belongs to the RecR family.</text>
</comment>
<feature type="chain" id="PRO_1000089702" description="Recombination protein RecR">
    <location>
        <begin position="1"/>
        <end position="200"/>
    </location>
</feature>
<feature type="domain" description="Toprim" evidence="1">
    <location>
        <begin position="81"/>
        <end position="176"/>
    </location>
</feature>
<feature type="zinc finger region" description="C4-type" evidence="1">
    <location>
        <begin position="57"/>
        <end position="72"/>
    </location>
</feature>
<reference key="1">
    <citation type="journal article" date="2008" name="BMC Genomics">
        <title>The genome sequence of the fish pathogen Aliivibrio salmonicida strain LFI1238 shows extensive evidence of gene decay.</title>
        <authorList>
            <person name="Hjerde E."/>
            <person name="Lorentzen M.S."/>
            <person name="Holden M.T."/>
            <person name="Seeger K."/>
            <person name="Paulsen S."/>
            <person name="Bason N."/>
            <person name="Churcher C."/>
            <person name="Harris D."/>
            <person name="Norbertczak H."/>
            <person name="Quail M.A."/>
            <person name="Sanders S."/>
            <person name="Thurston S."/>
            <person name="Parkhill J."/>
            <person name="Willassen N.P."/>
            <person name="Thomson N.R."/>
        </authorList>
    </citation>
    <scope>NUCLEOTIDE SEQUENCE [LARGE SCALE GENOMIC DNA]</scope>
    <source>
        <strain>LFI1238</strain>
    </source>
</reference>